<proteinExistence type="inferred from homology"/>
<comment type="catalytic activity">
    <reaction evidence="1">
        <text>uridine + ATP = UMP + ADP + H(+)</text>
        <dbReference type="Rhea" id="RHEA:16825"/>
        <dbReference type="ChEBI" id="CHEBI:15378"/>
        <dbReference type="ChEBI" id="CHEBI:16704"/>
        <dbReference type="ChEBI" id="CHEBI:30616"/>
        <dbReference type="ChEBI" id="CHEBI:57865"/>
        <dbReference type="ChEBI" id="CHEBI:456216"/>
        <dbReference type="EC" id="2.7.1.48"/>
    </reaction>
</comment>
<comment type="catalytic activity">
    <reaction evidence="1">
        <text>cytidine + ATP = CMP + ADP + H(+)</text>
        <dbReference type="Rhea" id="RHEA:24674"/>
        <dbReference type="ChEBI" id="CHEBI:15378"/>
        <dbReference type="ChEBI" id="CHEBI:17562"/>
        <dbReference type="ChEBI" id="CHEBI:30616"/>
        <dbReference type="ChEBI" id="CHEBI:60377"/>
        <dbReference type="ChEBI" id="CHEBI:456216"/>
        <dbReference type="EC" id="2.7.1.48"/>
    </reaction>
</comment>
<comment type="pathway">
    <text evidence="1">Pyrimidine metabolism; CTP biosynthesis via salvage pathway; CTP from cytidine: step 1/3.</text>
</comment>
<comment type="pathway">
    <text evidence="1">Pyrimidine metabolism; UMP biosynthesis via salvage pathway; UMP from uridine: step 1/1.</text>
</comment>
<comment type="subcellular location">
    <subcellularLocation>
        <location evidence="1">Cytoplasm</location>
    </subcellularLocation>
</comment>
<comment type="similarity">
    <text evidence="1">Belongs to the uridine kinase family.</text>
</comment>
<reference key="1">
    <citation type="submission" date="2006-08" db="EMBL/GenBank/DDBJ databases">
        <title>Complete sequence of Shewanella frigidimarina NCIMB 400.</title>
        <authorList>
            <consortium name="US DOE Joint Genome Institute"/>
            <person name="Copeland A."/>
            <person name="Lucas S."/>
            <person name="Lapidus A."/>
            <person name="Barry K."/>
            <person name="Detter J.C."/>
            <person name="Glavina del Rio T."/>
            <person name="Hammon N."/>
            <person name="Israni S."/>
            <person name="Dalin E."/>
            <person name="Tice H."/>
            <person name="Pitluck S."/>
            <person name="Fredrickson J.K."/>
            <person name="Kolker E."/>
            <person name="McCuel L.A."/>
            <person name="DiChristina T."/>
            <person name="Nealson K.H."/>
            <person name="Newman D."/>
            <person name="Tiedje J.M."/>
            <person name="Zhou J."/>
            <person name="Romine M.F."/>
            <person name="Culley D.E."/>
            <person name="Serres M."/>
            <person name="Chertkov O."/>
            <person name="Brettin T."/>
            <person name="Bruce D."/>
            <person name="Han C."/>
            <person name="Tapia R."/>
            <person name="Gilna P."/>
            <person name="Schmutz J."/>
            <person name="Larimer F."/>
            <person name="Land M."/>
            <person name="Hauser L."/>
            <person name="Kyrpides N."/>
            <person name="Mikhailova N."/>
            <person name="Richardson P."/>
        </authorList>
    </citation>
    <scope>NUCLEOTIDE SEQUENCE [LARGE SCALE GENOMIC DNA]</scope>
    <source>
        <strain>NCIMB 400</strain>
    </source>
</reference>
<sequence length="212" mass="24039">MNSQQCVIIGIAGASASGKSLIAKTIFEELCRDLGTNQIGVINEDAYYHDQSHLTMEDRVKTNYDHPKALDHQLLASHLTQLKQGEPVSIPCYSYTEHTRISDTLTMQPKKVIILEGILLLTNPKLRDLMDASVFMDTPLDICFLRRLTRDVAERGRTMESVISQYKRTVRPMFLQFIEPSKQYADIIVPRGGKNRIATDILKARIQHLLAK</sequence>
<dbReference type="EC" id="2.7.1.48" evidence="1"/>
<dbReference type="EMBL" id="CP000447">
    <property type="protein sequence ID" value="ABI72090.1"/>
    <property type="molecule type" value="Genomic_DNA"/>
</dbReference>
<dbReference type="RefSeq" id="WP_011637700.1">
    <property type="nucleotide sequence ID" value="NC_008345.1"/>
</dbReference>
<dbReference type="SMR" id="Q081H5"/>
<dbReference type="STRING" id="318167.Sfri_2244"/>
<dbReference type="KEGG" id="sfr:Sfri_2244"/>
<dbReference type="eggNOG" id="COG0572">
    <property type="taxonomic scope" value="Bacteria"/>
</dbReference>
<dbReference type="HOGENOM" id="CLU_021278_1_2_6"/>
<dbReference type="OrthoDB" id="9777642at2"/>
<dbReference type="UniPathway" id="UPA00574">
    <property type="reaction ID" value="UER00637"/>
</dbReference>
<dbReference type="UniPathway" id="UPA00579">
    <property type="reaction ID" value="UER00640"/>
</dbReference>
<dbReference type="Proteomes" id="UP000000684">
    <property type="component" value="Chromosome"/>
</dbReference>
<dbReference type="GO" id="GO:0005737">
    <property type="term" value="C:cytoplasm"/>
    <property type="evidence" value="ECO:0007669"/>
    <property type="project" value="UniProtKB-SubCell"/>
</dbReference>
<dbReference type="GO" id="GO:0005524">
    <property type="term" value="F:ATP binding"/>
    <property type="evidence" value="ECO:0007669"/>
    <property type="project" value="UniProtKB-UniRule"/>
</dbReference>
<dbReference type="GO" id="GO:0043771">
    <property type="term" value="F:cytidine kinase activity"/>
    <property type="evidence" value="ECO:0007669"/>
    <property type="project" value="RHEA"/>
</dbReference>
<dbReference type="GO" id="GO:0004849">
    <property type="term" value="F:uridine kinase activity"/>
    <property type="evidence" value="ECO:0007669"/>
    <property type="project" value="UniProtKB-UniRule"/>
</dbReference>
<dbReference type="GO" id="GO:0044211">
    <property type="term" value="P:CTP salvage"/>
    <property type="evidence" value="ECO:0007669"/>
    <property type="project" value="UniProtKB-UniRule"/>
</dbReference>
<dbReference type="GO" id="GO:0044206">
    <property type="term" value="P:UMP salvage"/>
    <property type="evidence" value="ECO:0007669"/>
    <property type="project" value="UniProtKB-UniRule"/>
</dbReference>
<dbReference type="CDD" id="cd02023">
    <property type="entry name" value="UMPK"/>
    <property type="match status" value="1"/>
</dbReference>
<dbReference type="Gene3D" id="3.40.50.300">
    <property type="entry name" value="P-loop containing nucleotide triphosphate hydrolases"/>
    <property type="match status" value="1"/>
</dbReference>
<dbReference type="HAMAP" id="MF_00551">
    <property type="entry name" value="Uridine_kinase"/>
    <property type="match status" value="1"/>
</dbReference>
<dbReference type="InterPro" id="IPR027417">
    <property type="entry name" value="P-loop_NTPase"/>
</dbReference>
<dbReference type="InterPro" id="IPR006083">
    <property type="entry name" value="PRK/URK"/>
</dbReference>
<dbReference type="InterPro" id="IPR026008">
    <property type="entry name" value="Uridine_kinase"/>
</dbReference>
<dbReference type="InterPro" id="IPR000764">
    <property type="entry name" value="Uridine_kinase-like"/>
</dbReference>
<dbReference type="NCBIfam" id="NF004018">
    <property type="entry name" value="PRK05480.1"/>
    <property type="match status" value="1"/>
</dbReference>
<dbReference type="NCBIfam" id="TIGR00235">
    <property type="entry name" value="udk"/>
    <property type="match status" value="1"/>
</dbReference>
<dbReference type="PANTHER" id="PTHR10285">
    <property type="entry name" value="URIDINE KINASE"/>
    <property type="match status" value="1"/>
</dbReference>
<dbReference type="Pfam" id="PF00485">
    <property type="entry name" value="PRK"/>
    <property type="match status" value="1"/>
</dbReference>
<dbReference type="PRINTS" id="PR00988">
    <property type="entry name" value="URIDINKINASE"/>
</dbReference>
<dbReference type="SUPFAM" id="SSF52540">
    <property type="entry name" value="P-loop containing nucleoside triphosphate hydrolases"/>
    <property type="match status" value="1"/>
</dbReference>
<accession>Q081H5</accession>
<protein>
    <recommendedName>
        <fullName evidence="1">Uridine kinase</fullName>
        <ecNumber evidence="1">2.7.1.48</ecNumber>
    </recommendedName>
    <alternativeName>
        <fullName evidence="1">Cytidine monophosphokinase</fullName>
    </alternativeName>
    <alternativeName>
        <fullName evidence="1">Uridine monophosphokinase</fullName>
    </alternativeName>
</protein>
<name>URK_SHEFN</name>
<evidence type="ECO:0000255" key="1">
    <source>
        <dbReference type="HAMAP-Rule" id="MF_00551"/>
    </source>
</evidence>
<feature type="chain" id="PRO_1000017894" description="Uridine kinase">
    <location>
        <begin position="1"/>
        <end position="212"/>
    </location>
</feature>
<feature type="binding site" evidence="1">
    <location>
        <begin position="13"/>
        <end position="20"/>
    </location>
    <ligand>
        <name>ATP</name>
        <dbReference type="ChEBI" id="CHEBI:30616"/>
    </ligand>
</feature>
<gene>
    <name evidence="1" type="primary">udk</name>
    <name type="ordered locus">Sfri_2244</name>
</gene>
<organism>
    <name type="scientific">Shewanella frigidimarina (strain NCIMB 400)</name>
    <dbReference type="NCBI Taxonomy" id="318167"/>
    <lineage>
        <taxon>Bacteria</taxon>
        <taxon>Pseudomonadati</taxon>
        <taxon>Pseudomonadota</taxon>
        <taxon>Gammaproteobacteria</taxon>
        <taxon>Alteromonadales</taxon>
        <taxon>Shewanellaceae</taxon>
        <taxon>Shewanella</taxon>
    </lineage>
</organism>
<keyword id="KW-0067">ATP-binding</keyword>
<keyword id="KW-0963">Cytoplasm</keyword>
<keyword id="KW-0418">Kinase</keyword>
<keyword id="KW-0547">Nucleotide-binding</keyword>
<keyword id="KW-1185">Reference proteome</keyword>
<keyword id="KW-0808">Transferase</keyword>